<protein>
    <recommendedName>
        <fullName evidence="1">2,3,4,5-tetrahydropyridine-2,6-dicarboxylate N-succinyltransferase</fullName>
        <ecNumber evidence="1">2.3.1.117</ecNumber>
    </recommendedName>
    <alternativeName>
        <fullName evidence="1">Tetrahydrodipicolinate N-succinyltransferase</fullName>
        <shortName evidence="1">THDP succinyltransferase</shortName>
        <shortName evidence="1">THP succinyltransferase</shortName>
        <shortName evidence="1">Tetrahydropicolinate succinylase</shortName>
    </alternativeName>
</protein>
<dbReference type="EC" id="2.3.1.117" evidence="1"/>
<dbReference type="EMBL" id="AE005674">
    <property type="protein sequence ID" value="AAN41818.1"/>
    <property type="molecule type" value="Genomic_DNA"/>
</dbReference>
<dbReference type="EMBL" id="AE014073">
    <property type="protein sequence ID" value="AAP15699.1"/>
    <property type="molecule type" value="Genomic_DNA"/>
</dbReference>
<dbReference type="RefSeq" id="NP_706111.1">
    <property type="nucleotide sequence ID" value="NC_004337.2"/>
</dbReference>
<dbReference type="RefSeq" id="WP_001186650.1">
    <property type="nucleotide sequence ID" value="NZ_WPGW01000006.1"/>
</dbReference>
<dbReference type="SMR" id="P0A9D9"/>
<dbReference type="STRING" id="198214.SF0156"/>
<dbReference type="PaxDb" id="198214-SF0156"/>
<dbReference type="GeneID" id="1024466"/>
<dbReference type="GeneID" id="93777259"/>
<dbReference type="KEGG" id="sfl:SF0156"/>
<dbReference type="KEGG" id="sfx:S0159"/>
<dbReference type="PATRIC" id="fig|198214.7.peg.176"/>
<dbReference type="HOGENOM" id="CLU_050859_0_1_6"/>
<dbReference type="UniPathway" id="UPA00034">
    <property type="reaction ID" value="UER00019"/>
</dbReference>
<dbReference type="Proteomes" id="UP000001006">
    <property type="component" value="Chromosome"/>
</dbReference>
<dbReference type="Proteomes" id="UP000002673">
    <property type="component" value="Chromosome"/>
</dbReference>
<dbReference type="GO" id="GO:0005737">
    <property type="term" value="C:cytoplasm"/>
    <property type="evidence" value="ECO:0007669"/>
    <property type="project" value="UniProtKB-SubCell"/>
</dbReference>
<dbReference type="GO" id="GO:0008666">
    <property type="term" value="F:2,3,4,5-tetrahydropyridine-2,6-dicarboxylate N-succinyltransferase activity"/>
    <property type="evidence" value="ECO:0007669"/>
    <property type="project" value="UniProtKB-UniRule"/>
</dbReference>
<dbReference type="GO" id="GO:0016779">
    <property type="term" value="F:nucleotidyltransferase activity"/>
    <property type="evidence" value="ECO:0007669"/>
    <property type="project" value="TreeGrafter"/>
</dbReference>
<dbReference type="GO" id="GO:0019877">
    <property type="term" value="P:diaminopimelate biosynthetic process"/>
    <property type="evidence" value="ECO:0007669"/>
    <property type="project" value="UniProtKB-UniRule"/>
</dbReference>
<dbReference type="GO" id="GO:0009089">
    <property type="term" value="P:lysine biosynthetic process via diaminopimelate"/>
    <property type="evidence" value="ECO:0007669"/>
    <property type="project" value="UniProtKB-UniRule"/>
</dbReference>
<dbReference type="CDD" id="cd03350">
    <property type="entry name" value="LbH_THP_succinylT"/>
    <property type="match status" value="1"/>
</dbReference>
<dbReference type="FunFam" id="1.10.166.10:FF:000001">
    <property type="entry name" value="2,3,4,5-tetrahydropyridine-2,6-dicarboxylate N-succinyltransferase"/>
    <property type="match status" value="1"/>
</dbReference>
<dbReference type="FunFam" id="2.160.10.10:FF:000004">
    <property type="entry name" value="2,3,4,5-tetrahydropyridine-2,6-dicarboxylate N-succinyltransferase"/>
    <property type="match status" value="1"/>
</dbReference>
<dbReference type="Gene3D" id="2.160.10.10">
    <property type="entry name" value="Hexapeptide repeat proteins"/>
    <property type="match status" value="1"/>
</dbReference>
<dbReference type="Gene3D" id="1.10.166.10">
    <property type="entry name" value="Tetrahydrodipicolinate-N-succinyltransferase, N-terminal domain"/>
    <property type="match status" value="1"/>
</dbReference>
<dbReference type="HAMAP" id="MF_00811">
    <property type="entry name" value="DapD"/>
    <property type="match status" value="1"/>
</dbReference>
<dbReference type="InterPro" id="IPR005664">
    <property type="entry name" value="DapD_Trfase_Hexpep_rpt_fam"/>
</dbReference>
<dbReference type="InterPro" id="IPR001451">
    <property type="entry name" value="Hexapep"/>
</dbReference>
<dbReference type="InterPro" id="IPR018357">
    <property type="entry name" value="Hexapep_transf_CS"/>
</dbReference>
<dbReference type="InterPro" id="IPR023180">
    <property type="entry name" value="THP_succinylTrfase_dom1"/>
</dbReference>
<dbReference type="InterPro" id="IPR037133">
    <property type="entry name" value="THP_succinylTrfase_N_sf"/>
</dbReference>
<dbReference type="InterPro" id="IPR011004">
    <property type="entry name" value="Trimer_LpxA-like_sf"/>
</dbReference>
<dbReference type="NCBIfam" id="TIGR00965">
    <property type="entry name" value="dapD"/>
    <property type="match status" value="1"/>
</dbReference>
<dbReference type="NCBIfam" id="NF008808">
    <property type="entry name" value="PRK11830.1"/>
    <property type="match status" value="1"/>
</dbReference>
<dbReference type="PANTHER" id="PTHR19136:SF52">
    <property type="entry name" value="2,3,4,5-TETRAHYDROPYRIDINE-2,6-DICARBOXYLATE N-SUCCINYLTRANSFERASE"/>
    <property type="match status" value="1"/>
</dbReference>
<dbReference type="PANTHER" id="PTHR19136">
    <property type="entry name" value="MOLYBDENUM COFACTOR GUANYLYLTRANSFERASE"/>
    <property type="match status" value="1"/>
</dbReference>
<dbReference type="Pfam" id="PF14602">
    <property type="entry name" value="Hexapep_2"/>
    <property type="match status" value="1"/>
</dbReference>
<dbReference type="Pfam" id="PF14805">
    <property type="entry name" value="THDPS_N_2"/>
    <property type="match status" value="1"/>
</dbReference>
<dbReference type="SUPFAM" id="SSF51161">
    <property type="entry name" value="Trimeric LpxA-like enzymes"/>
    <property type="match status" value="1"/>
</dbReference>
<dbReference type="PROSITE" id="PS00101">
    <property type="entry name" value="HEXAPEP_TRANSFERASES"/>
    <property type="match status" value="1"/>
</dbReference>
<proteinExistence type="inferred from homology"/>
<feature type="chain" id="PRO_0000196971" description="2,3,4,5-tetrahydropyridine-2,6-dicarboxylate N-succinyltransferase">
    <location>
        <begin position="1"/>
        <end position="274"/>
    </location>
</feature>
<feature type="binding site" evidence="1">
    <location>
        <position position="104"/>
    </location>
    <ligand>
        <name>substrate</name>
    </ligand>
</feature>
<feature type="binding site" evidence="1">
    <location>
        <position position="141"/>
    </location>
    <ligand>
        <name>substrate</name>
    </ligand>
</feature>
<accession>P0A9D9</accession>
<accession>P03948</accession>
<evidence type="ECO:0000255" key="1">
    <source>
        <dbReference type="HAMAP-Rule" id="MF_00811"/>
    </source>
</evidence>
<keyword id="KW-0012">Acyltransferase</keyword>
<keyword id="KW-0028">Amino-acid biosynthesis</keyword>
<keyword id="KW-0963">Cytoplasm</keyword>
<keyword id="KW-0220">Diaminopimelate biosynthesis</keyword>
<keyword id="KW-0457">Lysine biosynthesis</keyword>
<keyword id="KW-1185">Reference proteome</keyword>
<keyword id="KW-0677">Repeat</keyword>
<keyword id="KW-0808">Transferase</keyword>
<reference key="1">
    <citation type="journal article" date="2002" name="Nucleic Acids Res.">
        <title>Genome sequence of Shigella flexneri 2a: insights into pathogenicity through comparison with genomes of Escherichia coli K12 and O157.</title>
        <authorList>
            <person name="Jin Q."/>
            <person name="Yuan Z."/>
            <person name="Xu J."/>
            <person name="Wang Y."/>
            <person name="Shen Y."/>
            <person name="Lu W."/>
            <person name="Wang J."/>
            <person name="Liu H."/>
            <person name="Yang J."/>
            <person name="Yang F."/>
            <person name="Zhang X."/>
            <person name="Zhang J."/>
            <person name="Yang G."/>
            <person name="Wu H."/>
            <person name="Qu D."/>
            <person name="Dong J."/>
            <person name="Sun L."/>
            <person name="Xue Y."/>
            <person name="Zhao A."/>
            <person name="Gao Y."/>
            <person name="Zhu J."/>
            <person name="Kan B."/>
            <person name="Ding K."/>
            <person name="Chen S."/>
            <person name="Cheng H."/>
            <person name="Yao Z."/>
            <person name="He B."/>
            <person name="Chen R."/>
            <person name="Ma D."/>
            <person name="Qiang B."/>
            <person name="Wen Y."/>
            <person name="Hou Y."/>
            <person name="Yu J."/>
        </authorList>
    </citation>
    <scope>NUCLEOTIDE SEQUENCE [LARGE SCALE GENOMIC DNA]</scope>
    <source>
        <strain>301 / Serotype 2a</strain>
    </source>
</reference>
<reference key="2">
    <citation type="journal article" date="2003" name="Infect. Immun.">
        <title>Complete genome sequence and comparative genomics of Shigella flexneri serotype 2a strain 2457T.</title>
        <authorList>
            <person name="Wei J."/>
            <person name="Goldberg M.B."/>
            <person name="Burland V."/>
            <person name="Venkatesan M.M."/>
            <person name="Deng W."/>
            <person name="Fournier G."/>
            <person name="Mayhew G.F."/>
            <person name="Plunkett G. III"/>
            <person name="Rose D.J."/>
            <person name="Darling A."/>
            <person name="Mau B."/>
            <person name="Perna N.T."/>
            <person name="Payne S.M."/>
            <person name="Runyen-Janecky L.J."/>
            <person name="Zhou S."/>
            <person name="Schwartz D.C."/>
            <person name="Blattner F.R."/>
        </authorList>
    </citation>
    <scope>NUCLEOTIDE SEQUENCE [LARGE SCALE GENOMIC DNA]</scope>
    <source>
        <strain>ATCC 700930 / 2457T / Serotype 2a</strain>
    </source>
</reference>
<organism>
    <name type="scientific">Shigella flexneri</name>
    <dbReference type="NCBI Taxonomy" id="623"/>
    <lineage>
        <taxon>Bacteria</taxon>
        <taxon>Pseudomonadati</taxon>
        <taxon>Pseudomonadota</taxon>
        <taxon>Gammaproteobacteria</taxon>
        <taxon>Enterobacterales</taxon>
        <taxon>Enterobacteriaceae</taxon>
        <taxon>Shigella</taxon>
    </lineage>
</organism>
<sequence>MQQLQNIIETAFERRAEITPANADTVTREAVNQVIALLDSGALRVAEKIDGQWVTHQWLKKAVLLSFRINDNQVIEGAESRYFDKVPMKFADYDEARFQKEGFRVVPPAAVRQGAFIARNTVLMPSYVNIGAYVDEGTMVDTWATVGSCAQIGKNVHLSGGVGIGGVLEPLQANPTIIEDNCFIGARSEVVEGVIVEEGSVISMGVYIGQSTRIYDRETGEIHYGRVPAGSVVVSGNLPSKDGKYSLYCAVIVKKVDAKTRGKVGINELLRTID</sequence>
<gene>
    <name evidence="1" type="primary">dapD</name>
    <name type="ordered locus">SF0156</name>
    <name type="ordered locus">S0159</name>
</gene>
<comment type="catalytic activity">
    <reaction evidence="1">
        <text>(S)-2,3,4,5-tetrahydrodipicolinate + succinyl-CoA + H2O = (S)-2-succinylamino-6-oxoheptanedioate + CoA</text>
        <dbReference type="Rhea" id="RHEA:17325"/>
        <dbReference type="ChEBI" id="CHEBI:15377"/>
        <dbReference type="ChEBI" id="CHEBI:15685"/>
        <dbReference type="ChEBI" id="CHEBI:16845"/>
        <dbReference type="ChEBI" id="CHEBI:57287"/>
        <dbReference type="ChEBI" id="CHEBI:57292"/>
        <dbReference type="EC" id="2.3.1.117"/>
    </reaction>
</comment>
<comment type="pathway">
    <text evidence="1">Amino-acid biosynthesis; L-lysine biosynthesis via DAP pathway; LL-2,6-diaminopimelate from (S)-tetrahydrodipicolinate (succinylase route): step 1/3.</text>
</comment>
<comment type="subunit">
    <text evidence="1">Homotrimer.</text>
</comment>
<comment type="subcellular location">
    <subcellularLocation>
        <location evidence="1">Cytoplasm</location>
    </subcellularLocation>
</comment>
<comment type="similarity">
    <text evidence="1">Belongs to the transferase hexapeptide repeat family.</text>
</comment>
<name>DAPD_SHIFL</name>